<name>RL27_PORGI</name>
<dbReference type="EMBL" id="AE015924">
    <property type="protein sequence ID" value="AAQ65530.1"/>
    <property type="molecule type" value="Genomic_DNA"/>
</dbReference>
<dbReference type="RefSeq" id="WP_004584800.1">
    <property type="nucleotide sequence ID" value="NC_002950.2"/>
</dbReference>
<dbReference type="SMR" id="Q7MX94"/>
<dbReference type="STRING" id="242619.PG_0315"/>
<dbReference type="EnsemblBacteria" id="AAQ65530">
    <property type="protein sequence ID" value="AAQ65530"/>
    <property type="gene ID" value="PG_0315"/>
</dbReference>
<dbReference type="GeneID" id="29256816"/>
<dbReference type="KEGG" id="pgi:PG_0315"/>
<dbReference type="eggNOG" id="COG0211">
    <property type="taxonomic scope" value="Bacteria"/>
</dbReference>
<dbReference type="HOGENOM" id="CLU_095424_4_1_10"/>
<dbReference type="Proteomes" id="UP000000588">
    <property type="component" value="Chromosome"/>
</dbReference>
<dbReference type="GO" id="GO:0022625">
    <property type="term" value="C:cytosolic large ribosomal subunit"/>
    <property type="evidence" value="ECO:0007669"/>
    <property type="project" value="TreeGrafter"/>
</dbReference>
<dbReference type="GO" id="GO:0003735">
    <property type="term" value="F:structural constituent of ribosome"/>
    <property type="evidence" value="ECO:0007669"/>
    <property type="project" value="InterPro"/>
</dbReference>
<dbReference type="GO" id="GO:0006412">
    <property type="term" value="P:translation"/>
    <property type="evidence" value="ECO:0007669"/>
    <property type="project" value="UniProtKB-UniRule"/>
</dbReference>
<dbReference type="FunFam" id="2.40.50.100:FF:000060">
    <property type="entry name" value="Apicoplast ribosomal protein L27"/>
    <property type="match status" value="1"/>
</dbReference>
<dbReference type="Gene3D" id="2.40.50.100">
    <property type="match status" value="1"/>
</dbReference>
<dbReference type="HAMAP" id="MF_00539">
    <property type="entry name" value="Ribosomal_bL27"/>
    <property type="match status" value="1"/>
</dbReference>
<dbReference type="InterPro" id="IPR001684">
    <property type="entry name" value="Ribosomal_bL27"/>
</dbReference>
<dbReference type="InterPro" id="IPR018261">
    <property type="entry name" value="Ribosomal_bL27_CS"/>
</dbReference>
<dbReference type="NCBIfam" id="TIGR00062">
    <property type="entry name" value="L27"/>
    <property type="match status" value="1"/>
</dbReference>
<dbReference type="PANTHER" id="PTHR15893:SF0">
    <property type="entry name" value="LARGE RIBOSOMAL SUBUNIT PROTEIN BL27M"/>
    <property type="match status" value="1"/>
</dbReference>
<dbReference type="PANTHER" id="PTHR15893">
    <property type="entry name" value="RIBOSOMAL PROTEIN L27"/>
    <property type="match status" value="1"/>
</dbReference>
<dbReference type="Pfam" id="PF01016">
    <property type="entry name" value="Ribosomal_L27"/>
    <property type="match status" value="1"/>
</dbReference>
<dbReference type="PRINTS" id="PR00063">
    <property type="entry name" value="RIBOSOMALL27"/>
</dbReference>
<dbReference type="SUPFAM" id="SSF110324">
    <property type="entry name" value="Ribosomal L27 protein-like"/>
    <property type="match status" value="1"/>
</dbReference>
<dbReference type="PROSITE" id="PS00831">
    <property type="entry name" value="RIBOSOMAL_L27"/>
    <property type="match status" value="1"/>
</dbReference>
<gene>
    <name evidence="1" type="primary">rpmA</name>
    <name type="ordered locus">PG_0315</name>
</gene>
<organism>
    <name type="scientific">Porphyromonas gingivalis (strain ATCC BAA-308 / W83)</name>
    <dbReference type="NCBI Taxonomy" id="242619"/>
    <lineage>
        <taxon>Bacteria</taxon>
        <taxon>Pseudomonadati</taxon>
        <taxon>Bacteroidota</taxon>
        <taxon>Bacteroidia</taxon>
        <taxon>Bacteroidales</taxon>
        <taxon>Porphyromonadaceae</taxon>
        <taxon>Porphyromonas</taxon>
    </lineage>
</organism>
<reference key="1">
    <citation type="journal article" date="2003" name="J. Bacteriol.">
        <title>Complete genome sequence of the oral pathogenic bacterium Porphyromonas gingivalis strain W83.</title>
        <authorList>
            <person name="Nelson K.E."/>
            <person name="Fleischmann R.D."/>
            <person name="DeBoy R.T."/>
            <person name="Paulsen I.T."/>
            <person name="Fouts D.E."/>
            <person name="Eisen J.A."/>
            <person name="Daugherty S.C."/>
            <person name="Dodson R.J."/>
            <person name="Durkin A.S."/>
            <person name="Gwinn M.L."/>
            <person name="Haft D.H."/>
            <person name="Kolonay J.F."/>
            <person name="Nelson W.C."/>
            <person name="Mason T.M."/>
            <person name="Tallon L."/>
            <person name="Gray J."/>
            <person name="Granger D."/>
            <person name="Tettelin H."/>
            <person name="Dong H."/>
            <person name="Galvin J.L."/>
            <person name="Duncan M.J."/>
            <person name="Dewhirst F.E."/>
            <person name="Fraser C.M."/>
        </authorList>
    </citation>
    <scope>NUCLEOTIDE SEQUENCE [LARGE SCALE GENOMIC DNA]</scope>
    <source>
        <strain>ATCC BAA-308 / W83</strain>
    </source>
</reference>
<keyword id="KW-1185">Reference proteome</keyword>
<keyword id="KW-0687">Ribonucleoprotein</keyword>
<keyword id="KW-0689">Ribosomal protein</keyword>
<feature type="chain" id="PRO_0000181142" description="Large ribosomal subunit protein bL27">
    <location>
        <begin position="1"/>
        <end position="85"/>
    </location>
</feature>
<feature type="region of interest" description="Disordered" evidence="2">
    <location>
        <begin position="1"/>
        <end position="21"/>
    </location>
</feature>
<protein>
    <recommendedName>
        <fullName evidence="1">Large ribosomal subunit protein bL27</fullName>
    </recommendedName>
    <alternativeName>
        <fullName evidence="3">50S ribosomal protein L27</fullName>
    </alternativeName>
</protein>
<sequence length="85" mass="9224">MAHKKGVGSSKNGRESESKRLGVKVYGGEMAKAGNILVRQRGTVHHPGENVGIGKDHTLYALKSGVVVFTRKKNDRSYVSIKTES</sequence>
<accession>Q7MX94</accession>
<evidence type="ECO:0000255" key="1">
    <source>
        <dbReference type="HAMAP-Rule" id="MF_00539"/>
    </source>
</evidence>
<evidence type="ECO:0000256" key="2">
    <source>
        <dbReference type="SAM" id="MobiDB-lite"/>
    </source>
</evidence>
<evidence type="ECO:0000305" key="3"/>
<proteinExistence type="inferred from homology"/>
<comment type="similarity">
    <text evidence="1">Belongs to the bacterial ribosomal protein bL27 family.</text>
</comment>